<keyword id="KW-0507">mRNA processing</keyword>
<keyword id="KW-0508">mRNA splicing</keyword>
<keyword id="KW-0539">Nucleus</keyword>
<keyword id="KW-1185">Reference proteome</keyword>
<keyword id="KW-0747">Spliceosome</keyword>
<name>SYF2_EREGS</name>
<dbReference type="EMBL" id="AE016819">
    <property type="protein sequence ID" value="AAS53679.1"/>
    <property type="molecule type" value="Genomic_DNA"/>
</dbReference>
<dbReference type="RefSeq" id="NP_985855.1">
    <property type="nucleotide sequence ID" value="NM_211210.1"/>
</dbReference>
<dbReference type="SMR" id="Q753K4"/>
<dbReference type="FunCoup" id="Q753K4">
    <property type="interactions" value="169"/>
</dbReference>
<dbReference type="STRING" id="284811.Q753K4"/>
<dbReference type="EnsemblFungi" id="AAS53679">
    <property type="protein sequence ID" value="AAS53679"/>
    <property type="gene ID" value="AGOS_AFR308W"/>
</dbReference>
<dbReference type="GeneID" id="4622119"/>
<dbReference type="KEGG" id="ago:AGOS_AFR308W"/>
<dbReference type="eggNOG" id="KOG2609">
    <property type="taxonomic scope" value="Eukaryota"/>
</dbReference>
<dbReference type="HOGENOM" id="CLU_114239_0_0_1"/>
<dbReference type="InParanoid" id="Q753K4"/>
<dbReference type="OMA" id="KLMNYTL"/>
<dbReference type="OrthoDB" id="199717at2759"/>
<dbReference type="Proteomes" id="UP000000591">
    <property type="component" value="Chromosome VI"/>
</dbReference>
<dbReference type="GO" id="GO:0005829">
    <property type="term" value="C:cytosol"/>
    <property type="evidence" value="ECO:0007669"/>
    <property type="project" value="EnsemblFungi"/>
</dbReference>
<dbReference type="GO" id="GO:0000974">
    <property type="term" value="C:Prp19 complex"/>
    <property type="evidence" value="ECO:0007669"/>
    <property type="project" value="EnsemblFungi"/>
</dbReference>
<dbReference type="GO" id="GO:0071006">
    <property type="term" value="C:U2-type catalytic step 1 spliceosome"/>
    <property type="evidence" value="ECO:0007669"/>
    <property type="project" value="EnsemblFungi"/>
</dbReference>
<dbReference type="GO" id="GO:0071007">
    <property type="term" value="C:U2-type catalytic step 2 spliceosome"/>
    <property type="evidence" value="ECO:0007669"/>
    <property type="project" value="EnsemblFungi"/>
</dbReference>
<dbReference type="GO" id="GO:0071008">
    <property type="term" value="C:U2-type post-mRNA release spliceosomal complex"/>
    <property type="evidence" value="ECO:0007669"/>
    <property type="project" value="EnsemblFungi"/>
</dbReference>
<dbReference type="GO" id="GO:0071004">
    <property type="term" value="C:U2-type prespliceosome"/>
    <property type="evidence" value="ECO:0007669"/>
    <property type="project" value="EnsemblFungi"/>
</dbReference>
<dbReference type="GO" id="GO:0000398">
    <property type="term" value="P:mRNA splicing, via spliceosome"/>
    <property type="evidence" value="ECO:0007669"/>
    <property type="project" value="EnsemblFungi"/>
</dbReference>
<dbReference type="InterPro" id="IPR013260">
    <property type="entry name" value="mRNA_splic_SYF2"/>
</dbReference>
<dbReference type="Pfam" id="PF08231">
    <property type="entry name" value="SYF2"/>
    <property type="match status" value="1"/>
</dbReference>
<proteinExistence type="inferred from homology"/>
<comment type="function">
    <text evidence="1">Involved in pre-mRNA splicing.</text>
</comment>
<comment type="subunit">
    <text evidence="1">Associated with the spliceosome.</text>
</comment>
<comment type="subcellular location">
    <subcellularLocation>
        <location evidence="1">Nucleus</location>
    </subcellularLocation>
</comment>
<comment type="similarity">
    <text evidence="3">Belongs to the SYF2 family.</text>
</comment>
<gene>
    <name type="primary">SYF2</name>
    <name type="ordered locus">AFR308W</name>
</gene>
<feature type="chain" id="PRO_0000072371" description="Pre-mRNA-splicing factor SYF2">
    <location>
        <begin position="1"/>
        <end position="192"/>
    </location>
</feature>
<feature type="region of interest" description="Disordered" evidence="2">
    <location>
        <begin position="16"/>
        <end position="62"/>
    </location>
</feature>
<feature type="region of interest" description="Disordered" evidence="2">
    <location>
        <begin position="76"/>
        <end position="108"/>
    </location>
</feature>
<feature type="region of interest" description="Disordered" evidence="2">
    <location>
        <begin position="148"/>
        <end position="192"/>
    </location>
</feature>
<feature type="compositionally biased region" description="Basic and acidic residues" evidence="2">
    <location>
        <begin position="18"/>
        <end position="41"/>
    </location>
</feature>
<feature type="compositionally biased region" description="Acidic residues" evidence="2">
    <location>
        <begin position="49"/>
        <end position="60"/>
    </location>
</feature>
<feature type="compositionally biased region" description="Basic and acidic residues" evidence="2">
    <location>
        <begin position="152"/>
        <end position="165"/>
    </location>
</feature>
<feature type="compositionally biased region" description="Basic and acidic residues" evidence="2">
    <location>
        <begin position="174"/>
        <end position="192"/>
    </location>
</feature>
<organism>
    <name type="scientific">Eremothecium gossypii (strain ATCC 10895 / CBS 109.51 / FGSC 9923 / NRRL Y-1056)</name>
    <name type="common">Yeast</name>
    <name type="synonym">Ashbya gossypii</name>
    <dbReference type="NCBI Taxonomy" id="284811"/>
    <lineage>
        <taxon>Eukaryota</taxon>
        <taxon>Fungi</taxon>
        <taxon>Dikarya</taxon>
        <taxon>Ascomycota</taxon>
        <taxon>Saccharomycotina</taxon>
        <taxon>Saccharomycetes</taxon>
        <taxon>Saccharomycetales</taxon>
        <taxon>Saccharomycetaceae</taxon>
        <taxon>Eremothecium</taxon>
    </lineage>
</organism>
<reference key="1">
    <citation type="journal article" date="2004" name="Science">
        <title>The Ashbya gossypii genome as a tool for mapping the ancient Saccharomyces cerevisiae genome.</title>
        <authorList>
            <person name="Dietrich F.S."/>
            <person name="Voegeli S."/>
            <person name="Brachat S."/>
            <person name="Lerch A."/>
            <person name="Gates K."/>
            <person name="Steiner S."/>
            <person name="Mohr C."/>
            <person name="Poehlmann R."/>
            <person name="Luedi P."/>
            <person name="Choi S."/>
            <person name="Wing R.A."/>
            <person name="Flavier A."/>
            <person name="Gaffney T.D."/>
            <person name="Philippsen P."/>
        </authorList>
    </citation>
    <scope>NUCLEOTIDE SEQUENCE [LARGE SCALE GENOMIC DNA]</scope>
    <source>
        <strain>ATCC 10895 / CBS 109.51 / FGSC 9923 / NRRL Y-1056</strain>
    </source>
</reference>
<reference key="2">
    <citation type="journal article" date="2013" name="G3 (Bethesda)">
        <title>Genomes of Ashbya fungi isolated from insects reveal four mating-type loci, numerous translocations, lack of transposons, and distinct gene duplications.</title>
        <authorList>
            <person name="Dietrich F.S."/>
            <person name="Voegeli S."/>
            <person name="Kuo S."/>
            <person name="Philippsen P."/>
        </authorList>
    </citation>
    <scope>GENOME REANNOTATION</scope>
    <source>
        <strain>ATCC 10895 / CBS 109.51 / FGSC 9923 / NRRL Y-1056</strain>
    </source>
</reference>
<accession>Q753K4</accession>
<evidence type="ECO:0000250" key="1"/>
<evidence type="ECO:0000256" key="2">
    <source>
        <dbReference type="SAM" id="MobiDB-lite"/>
    </source>
</evidence>
<evidence type="ECO:0000305" key="3"/>
<protein>
    <recommendedName>
        <fullName>Pre-mRNA-splicing factor SYF2</fullName>
    </recommendedName>
</protein>
<sequence>MGIEDINRRLRQLKKKRVDASIRNRKEAASEERARLAEGKPRVYSMAEEPADEAEADDTQSEQLKLLNYRIADYEKWDEKQKRHKQPSDGADLGELANSTYRSELHQLHRRGVVKGRATNGRISASGKVVLDDEPELVEKLAAAVQQTAKRRHEERQKKAAKDGGRATAGSLNDKNRHFNEKLDREFRKRGQ</sequence>